<feature type="chain" id="PRO_0000158987" description="Myelin basic protein">
    <location>
        <begin position="1"/>
        <end position="169"/>
    </location>
</feature>
<feature type="region of interest" description="Disordered" evidence="6">
    <location>
        <begin position="1"/>
        <end position="114"/>
    </location>
</feature>
<feature type="region of interest" description="Induces experimental autoimmune encephalomyelitis (EAE) 1">
    <location>
        <begin position="43"/>
        <end position="87"/>
    </location>
</feature>
<feature type="region of interest" description="Induces experimental autoimmune encephalomyelitis (EAE) 2">
    <location>
        <begin position="114"/>
        <end position="122"/>
    </location>
</feature>
<feature type="region of interest" description="Disordered" evidence="6">
    <location>
        <begin position="133"/>
        <end position="169"/>
    </location>
</feature>
<feature type="site" description="Cleavage; by CTSG" evidence="2">
    <location>
        <begin position="89"/>
        <end position="90"/>
    </location>
</feature>
<feature type="site" description="Cleavage; by CTSG" evidence="2">
    <location>
        <begin position="113"/>
        <end position="114"/>
    </location>
</feature>
<feature type="modified residue" description="N-acetylalanine" evidence="8">
    <location>
        <position position="1"/>
    </location>
</feature>
<feature type="modified residue" description="Phosphoserine; in C5 and C6" evidence="11">
    <location>
        <position position="7"/>
    </location>
</feature>
<feature type="modified residue" description="Phosphoserine" evidence="4">
    <location>
        <position position="10"/>
    </location>
</feature>
<feature type="modified residue" description="Phosphotyrosine" evidence="3">
    <location>
        <position position="12"/>
    </location>
</feature>
<feature type="modified residue" description="Phosphoserine" evidence="4">
    <location>
        <position position="17"/>
    </location>
</feature>
<feature type="modified residue" description="Phosphothreonine" evidence="3">
    <location>
        <position position="18"/>
    </location>
</feature>
<feature type="modified residue" description="Citrulline; in form C8b" evidence="8">
    <location>
        <position position="23"/>
    </location>
</feature>
<feature type="modified residue" description="Citrulline" evidence="1">
    <location>
        <position position="29"/>
    </location>
</feature>
<feature type="modified residue" description="Phosphothreonine" evidence="4">
    <location>
        <position position="33"/>
    </location>
</feature>
<feature type="modified residue" description="Phosphoserine" evidence="4">
    <location>
        <position position="38"/>
    </location>
</feature>
<feature type="modified residue" description="Citrulline; alternate" evidence="9">
    <location>
        <position position="41"/>
    </location>
</feature>
<feature type="modified residue" description="Omega-N-methylarginine; alternate" evidence="4">
    <location>
        <position position="41"/>
    </location>
</feature>
<feature type="modified residue" description="Citrulline; in form C8b" evidence="8">
    <location>
        <position position="47"/>
    </location>
</feature>
<feature type="modified residue" description="Omega-N-methylarginine" evidence="4">
    <location>
        <position position="47"/>
    </location>
</feature>
<feature type="modified residue" description="Phosphoserine; in C4, C5 and C6" evidence="11">
    <location>
        <position position="54"/>
    </location>
</feature>
<feature type="modified residue" description="Citrulline" evidence="9">
    <location>
        <position position="63"/>
    </location>
</feature>
<feature type="modified residue" description="Phosphothreonine" evidence="4">
    <location>
        <position position="65"/>
    </location>
</feature>
<feature type="modified residue" description="Phosphotyrosine" evidence="4">
    <location>
        <position position="67"/>
    </location>
</feature>
<feature type="modified residue" description="Phosphothreonine" evidence="3">
    <location>
        <position position="94"/>
    </location>
</feature>
<feature type="modified residue" description="Citrulline; in form C2, C3, C8a and C8b" evidence="8 9">
    <location>
        <position position="96"/>
    </location>
</feature>
<feature type="modified residue" description="Phosphothreonine; by MAPK; in C3, C4, C5 and C6" evidence="7 8 11">
    <location>
        <position position="97"/>
    </location>
</feature>
<feature type="modified residue" description="Deamidated glutamine; in form C5" evidence="8">
    <location>
        <position position="102"/>
    </location>
</feature>
<feature type="modified residue" description="Citrulline; alternate" evidence="9">
    <location>
        <position position="106"/>
    </location>
</feature>
<feature type="modified residue" description="Omega-N-methylarginine; alternate" evidence="8 9 10">
    <location>
        <position position="106"/>
    </location>
</feature>
<feature type="modified residue" description="Symmetric dimethylarginine; alternate" evidence="8 9 10">
    <location>
        <position position="106"/>
    </location>
</feature>
<feature type="modified residue" description="Citrulline" evidence="9">
    <location>
        <position position="112"/>
    </location>
</feature>
<feature type="modified residue" description="Phosphoserine" evidence="5">
    <location>
        <position position="114"/>
    </location>
</feature>
<feature type="modified residue" description="Deamidated glutamine; in form C3" evidence="8">
    <location>
        <position position="120"/>
    </location>
</feature>
<feature type="modified residue" description="N6-acetyllysine" evidence="8">
    <location>
        <position position="121"/>
    </location>
</feature>
<feature type="modified residue" description="Citrulline" evidence="9">
    <location>
        <position position="129"/>
    </location>
</feature>
<feature type="modified residue" description="Deamidated glutamine; in form C2" evidence="11">
    <location>
        <position position="146"/>
    </location>
</feature>
<feature type="modified residue" description="Citrulline" evidence="1">
    <location>
        <position position="158"/>
    </location>
</feature>
<feature type="modified residue" description="Phosphoserine; in C4 and C6" evidence="11">
    <location>
        <position position="160"/>
    </location>
</feature>
<feature type="modified residue" description="Citrulline; in form C3" evidence="8 9">
    <location>
        <position position="161"/>
    </location>
</feature>
<feature type="modified residue" description="Phosphoserine; in form C3, C5 and C6" evidence="11">
    <location>
        <position position="164"/>
    </location>
</feature>
<feature type="modified residue" description="Citrulline" evidence="9">
    <location>
        <position position="168"/>
    </location>
</feature>
<feature type="modified residue" description="Citrulline" evidence="9">
    <location>
        <position position="169"/>
    </location>
</feature>
<organism>
    <name type="scientific">Bos taurus</name>
    <name type="common">Bovine</name>
    <dbReference type="NCBI Taxonomy" id="9913"/>
    <lineage>
        <taxon>Eukaryota</taxon>
        <taxon>Metazoa</taxon>
        <taxon>Chordata</taxon>
        <taxon>Craniata</taxon>
        <taxon>Vertebrata</taxon>
        <taxon>Euteleostomi</taxon>
        <taxon>Mammalia</taxon>
        <taxon>Eutheria</taxon>
        <taxon>Laurasiatheria</taxon>
        <taxon>Artiodactyla</taxon>
        <taxon>Ruminantia</taxon>
        <taxon>Pecora</taxon>
        <taxon>Bovidae</taxon>
        <taxon>Bovinae</taxon>
        <taxon>Bos</taxon>
    </lineage>
</organism>
<gene>
    <name type="primary">MBP</name>
</gene>
<protein>
    <recommendedName>
        <fullName>Myelin basic protein</fullName>
        <shortName>MBP</shortName>
    </recommendedName>
    <alternativeName>
        <fullName>20 kDa microtubule-stabilizing protein</fullName>
    </alternativeName>
    <alternativeName>
        <fullName>Myelin A1 protein</fullName>
    </alternativeName>
</protein>
<name>MBP_BOVIN</name>
<accession>P02687</accession>
<accession>Q9BGM8</accession>
<accession>Q9TS63</accession>
<accession>Q9TSA6</accession>
<evidence type="ECO:0000250" key="1"/>
<evidence type="ECO:0000250" key="2">
    <source>
        <dbReference type="UniProtKB" id="P02686"/>
    </source>
</evidence>
<evidence type="ECO:0000250" key="3">
    <source>
        <dbReference type="UniProtKB" id="P02688"/>
    </source>
</evidence>
<evidence type="ECO:0000250" key="4">
    <source>
        <dbReference type="UniProtKB" id="P04370"/>
    </source>
</evidence>
<evidence type="ECO:0000250" key="5">
    <source>
        <dbReference type="UniProtKB" id="P25274"/>
    </source>
</evidence>
<evidence type="ECO:0000256" key="6">
    <source>
        <dbReference type="SAM" id="MobiDB-lite"/>
    </source>
</evidence>
<evidence type="ECO:0000269" key="7">
    <source>
    </source>
</evidence>
<evidence type="ECO:0000269" key="8">
    <source>
    </source>
</evidence>
<evidence type="ECO:0000269" key="9">
    <source>
    </source>
</evidence>
<evidence type="ECO:0000269" key="10">
    <source>
    </source>
</evidence>
<evidence type="ECO:0000269" key="11">
    <source>
    </source>
</evidence>
<evidence type="ECO:0000305" key="12"/>
<comment type="function">
    <text evidence="1">Is, with PLP, the most abundant protein component of the myelin membrane in the CNS. Has a role in both the formation and stabilization of this compact multilayer arrangement of bilayers. Each splice variant and charge isomer may have a specialized function in the assembly of an optimized, biochemically functional myelin membrane (By similarity).</text>
</comment>
<comment type="subunit">
    <text>Homodimer; self-associates in the presence of lysolipid.</text>
</comment>
<comment type="interaction">
    <interactant intactId="EBI-908215">
        <id>P02687</id>
    </interactant>
    <interactant intactId="EBI-9006039">
        <id>A2A121</id>
        <label>dclk2a</label>
    </interactant>
    <organismsDiffer>true</organismsDiffer>
    <experiments>4</experiments>
</comment>
<comment type="interaction">
    <interactant intactId="EBI-908215">
        <id>P02687</id>
    </interactant>
    <interactant intactId="EBI-5323863">
        <id>Q5S007</id>
        <label>LRRK2</label>
    </interactant>
    <organismsDiffer>true</organismsDiffer>
    <experiments>3</experiments>
</comment>
<comment type="interaction">
    <interactant intactId="EBI-908215">
        <id>P02687</id>
    </interactant>
    <interactant intactId="EBI-959949">
        <id>P28482</id>
        <label>MAPK1</label>
    </interactant>
    <organismsDiffer>true</organismsDiffer>
    <experiments>2</experiments>
</comment>
<comment type="subcellular location">
    <subcellularLocation>
        <location>Myelin membrane</location>
        <topology>Peripheral membrane protein</topology>
        <orientation>Cytoplasmic side</orientation>
    </subcellularLocation>
    <text>Cytoplasmic side of myelin.</text>
</comment>
<comment type="tissue specificity">
    <text>Found in both the central and the peripheral nervous system.</text>
</comment>
<comment type="PTM">
    <text evidence="7 8 9 10">At least 6 charge isomers; C1 (the most cationic and least modified form), C2, C3, C4, C5 and C6 (the least cationic form); are produced as a result of optional post-translational modifications, such as phosphorylation of serine or threonine residues, deamidation of glutamine or asparagine residues, citrullination and methylation of arginine residues.</text>
</comment>
<comment type="PTM">
    <text evidence="1">Phosphorylated by TAOK2, VRK2, MAPK11, MAPK12, MAPK14 and MINK1.</text>
</comment>
<comment type="PTM">
    <text evidence="2">Proteolytically cleaved in B cell lysosomes by cathepsin CTSG which degrades the major immunogenic MBP epitope and prevents the activation of MBP-specific autoreactive T cells.</text>
</comment>
<comment type="similarity">
    <text evidence="12">Belongs to the myelin basic protein family.</text>
</comment>
<sequence>AAQKRPSQRSKYLASASTMDHARHGFLPRHRDTGILDSLGRFFGSDRGAPKRGSGKDGHHAARTTHYGSLPQKAQGHRPQDENPVVHFFKNIVTPRTPPPSQGKGRGLSLSRFSWGAEGQKPGFGYGGRASDYKSAHKGLKGHDAQGTLSKIFKLGGRDSRSGSPMARR</sequence>
<keyword id="KW-0007">Acetylation</keyword>
<keyword id="KW-0069">Autoimmune encephalomyelitis</keyword>
<keyword id="KW-1003">Cell membrane</keyword>
<keyword id="KW-0164">Citrullination</keyword>
<keyword id="KW-0903">Direct protein sequencing</keyword>
<keyword id="KW-0472">Membrane</keyword>
<keyword id="KW-0488">Methylation</keyword>
<keyword id="KW-0597">Phosphoprotein</keyword>
<keyword id="KW-1185">Reference proteome</keyword>
<dbReference type="EMBL" id="AF226693">
    <property type="protein sequence ID" value="AAK00645.1"/>
    <property type="molecule type" value="mRNA"/>
</dbReference>
<dbReference type="PIR" id="A92089">
    <property type="entry name" value="MBBOB"/>
</dbReference>
<dbReference type="BMRB" id="P02687"/>
<dbReference type="SASBDB" id="P02687"/>
<dbReference type="SMR" id="P02687"/>
<dbReference type="DIP" id="DIP-29967N"/>
<dbReference type="FunCoup" id="P02687">
    <property type="interactions" value="2"/>
</dbReference>
<dbReference type="IntAct" id="P02687">
    <property type="interactions" value="37"/>
</dbReference>
<dbReference type="MINT" id="P02687"/>
<dbReference type="STRING" id="9913.ENSBTAP00000074415"/>
<dbReference type="iPTMnet" id="P02687"/>
<dbReference type="CPTAC" id="CPTAC-1475"/>
<dbReference type="PaxDb" id="9913-ENSBTAP00000002984"/>
<dbReference type="eggNOG" id="ENOG502S4SJ">
    <property type="taxonomic scope" value="Eukaryota"/>
</dbReference>
<dbReference type="InParanoid" id="P02687"/>
<dbReference type="OrthoDB" id="8862162at2759"/>
<dbReference type="Proteomes" id="UP000009136">
    <property type="component" value="Unplaced"/>
</dbReference>
<dbReference type="GO" id="GO:0071944">
    <property type="term" value="C:cell periphery"/>
    <property type="evidence" value="ECO:0000318"/>
    <property type="project" value="GO_Central"/>
</dbReference>
<dbReference type="GO" id="GO:0043218">
    <property type="term" value="C:compact myelin"/>
    <property type="evidence" value="ECO:0000318"/>
    <property type="project" value="GO_Central"/>
</dbReference>
<dbReference type="GO" id="GO:0033269">
    <property type="term" value="C:internode region of axon"/>
    <property type="evidence" value="ECO:0000318"/>
    <property type="project" value="GO_Central"/>
</dbReference>
<dbReference type="GO" id="GO:0043209">
    <property type="term" value="C:myelin sheath"/>
    <property type="evidence" value="ECO:0000314"/>
    <property type="project" value="CAFA"/>
</dbReference>
<dbReference type="GO" id="GO:0043025">
    <property type="term" value="C:neuronal cell body"/>
    <property type="evidence" value="ECO:0000318"/>
    <property type="project" value="GO_Central"/>
</dbReference>
<dbReference type="GO" id="GO:0005886">
    <property type="term" value="C:plasma membrane"/>
    <property type="evidence" value="ECO:0007669"/>
    <property type="project" value="UniProtKB-KW"/>
</dbReference>
<dbReference type="GO" id="GO:0032991">
    <property type="term" value="C:protein-containing complex"/>
    <property type="evidence" value="ECO:0000314"/>
    <property type="project" value="CAFA"/>
</dbReference>
<dbReference type="GO" id="GO:0005516">
    <property type="term" value="F:calmodulin binding"/>
    <property type="evidence" value="ECO:0000353"/>
    <property type="project" value="CAFA"/>
</dbReference>
<dbReference type="GO" id="GO:0008289">
    <property type="term" value="F:lipid binding"/>
    <property type="evidence" value="ECO:0000314"/>
    <property type="project" value="DisProt"/>
</dbReference>
<dbReference type="GO" id="GO:0005543">
    <property type="term" value="F:phospholipid binding"/>
    <property type="evidence" value="ECO:0000314"/>
    <property type="project" value="CAFA"/>
</dbReference>
<dbReference type="GO" id="GO:0019911">
    <property type="term" value="F:structural constituent of myelin sheath"/>
    <property type="evidence" value="ECO:0007669"/>
    <property type="project" value="InterPro"/>
</dbReference>
<dbReference type="GO" id="GO:0042552">
    <property type="term" value="P:myelination"/>
    <property type="evidence" value="ECO:0000318"/>
    <property type="project" value="GO_Central"/>
</dbReference>
<dbReference type="DisProt" id="DP00047"/>
<dbReference type="InterPro" id="IPR000548">
    <property type="entry name" value="Myelin_BP"/>
</dbReference>
<dbReference type="PANTHER" id="PTHR11429">
    <property type="entry name" value="MYELIN BASIC PROTEIN"/>
    <property type="match status" value="1"/>
</dbReference>
<dbReference type="PANTHER" id="PTHR11429:SF0">
    <property type="entry name" value="MYELIN BASIC PROTEIN"/>
    <property type="match status" value="1"/>
</dbReference>
<dbReference type="Pfam" id="PF01669">
    <property type="entry name" value="Myelin_MBP"/>
    <property type="match status" value="1"/>
</dbReference>
<dbReference type="PRINTS" id="PR00212">
    <property type="entry name" value="MYELINMBP"/>
</dbReference>
<dbReference type="PROSITE" id="PS00569">
    <property type="entry name" value="MYELIN_MBP"/>
    <property type="match status" value="1"/>
</dbReference>
<proteinExistence type="evidence at protein level"/>
<reference key="1">
    <citation type="journal article" date="1971" name="J. Biol. Chem.">
        <title>Basic A1 protein of the myelin membrane. The complete amino acid sequence.</title>
        <authorList>
            <person name="Eylar E.H."/>
            <person name="Brostoff S.W."/>
            <person name="Hashim G."/>
            <person name="Caccam J."/>
            <person name="Burnett P."/>
        </authorList>
    </citation>
    <scope>PROTEIN SEQUENCE</scope>
</reference>
<reference key="2">
    <citation type="journal article" date="1974" name="J. Biol. Chem.">
        <title>Specific cleavage of the A1 protein from myelin with cathepsin D.</title>
        <authorList>
            <person name="Brostoff S.W."/>
            <person name="Reuter W."/>
            <person name="Hichens M."/>
            <person name="Eylar E.H."/>
        </authorList>
    </citation>
    <scope>SEQUENCE REVISION</scope>
</reference>
<reference key="3">
    <citation type="submission" date="2000-01" db="EMBL/GenBank/DDBJ databases">
        <title>A new MBP allele in Bos taurus is characterized by BseNI PCR-RFLP.</title>
        <authorList>
            <person name="Pietrowski D."/>
            <person name="Medugorac I."/>
            <person name="Foerster M."/>
        </authorList>
    </citation>
    <scope>NUCLEOTIDE SEQUENCE [MRNA] OF 4-56</scope>
</reference>
<reference key="4">
    <citation type="journal article" date="1971" name="J. Biol. Chem.">
        <title>Encephalitogenic fragment of myelin basic protein. Amino acid sequence of bovine, rabbit, guinea pig, monkey, and human fragments.</title>
        <authorList>
            <person name="Shapira R."/>
            <person name="McKneally S.S."/>
            <person name="Chou F.C.-H."/>
            <person name="Kibler R.F."/>
        </authorList>
    </citation>
    <scope>PROTEIN SEQUENCE OF 43-87</scope>
</reference>
<reference key="5">
    <citation type="journal article" date="1992" name="Biochemistry">
        <title>Ca(2+)-calmodulin regulated effectors of microtubule stability in bovine brain.</title>
        <authorList>
            <person name="Pirollet F."/>
            <person name="Derancourt J."/>
            <person name="Haiech J."/>
            <person name="Job D."/>
            <person name="Margolis R.L."/>
        </authorList>
    </citation>
    <scope>PROTEIN SEQUENCE OF 38-58 AND 119-141</scope>
    <source>
        <tissue>Brain</tissue>
    </source>
</reference>
<reference key="6">
    <citation type="journal article" date="1995" name="J. Biol. Chem.">
        <title>Purification of a new clathrin assembly protein from bovine brain coated vesicles and its identification as myelin basic protein.</title>
        <authorList>
            <person name="Prasad K."/>
            <person name="Barouch W."/>
            <person name="Martin B.M."/>
            <person name="Greene L.E."/>
            <person name="Eisenberg E."/>
        </authorList>
    </citation>
    <scope>PROTEIN SEQUENCE OF 30-42; 74-89 AND 114-129</scope>
</reference>
<reference key="7">
    <citation type="journal article" date="1970" name="Science">
        <title>Experimental allergic encephalomyelitis: synthesis of disease-inducing site of the basic protein.</title>
        <authorList>
            <person name="Eylar E.H."/>
            <person name="Caccam J."/>
            <person name="Jackson J.J."/>
            <person name="Westall F.C."/>
            <person name="Robinson A.B."/>
        </authorList>
    </citation>
    <scope>SYNTHESIS OF ALLERGIC ENCEPHALOMYELITIS INDUCING REGION</scope>
</reference>
<reference key="8">
    <citation type="journal article" date="1971" name="Proc. Natl. Acad. Sci. U.S.A.">
        <title>Localization of methylated arginine in the A1 protein from myelin.</title>
        <authorList>
            <person name="Brostoff S.W."/>
            <person name="Eylar E.H."/>
        </authorList>
    </citation>
    <scope>METHYLATION AT ARG-106</scope>
</reference>
<reference key="9">
    <citation type="journal article" date="1976" name="J. Biol. Chem.">
        <title>Basis of microheterogeneity of myelin basic protein.</title>
        <authorList>
            <person name="Chou F.C.-H."/>
            <person name="Chou C.-H.J."/>
            <person name="Shapira R."/>
            <person name="Kibler R.F."/>
        </authorList>
    </citation>
    <scope>IDENTIFICATION BY MASS SPECTROMETRY</scope>
</reference>
<reference key="10">
    <citation type="journal article" date="1990" name="J. Biol. Chem.">
        <title>Identification by mass spectrometry of threonine 97 in bovine myelin basic protein as a specific phosphorylation site for mitogen-activated protein kinase.</title>
        <authorList>
            <person name="Erickson A.K."/>
            <person name="Payne D.M."/>
            <person name="Martino P.A."/>
            <person name="Rossomando A.J."/>
            <person name="Shabanowitz J."/>
            <person name="Weber M.J."/>
            <person name="Hunt D.F."/>
            <person name="Sturgill T.W."/>
        </authorList>
    </citation>
    <scope>PROTEIN SEQUENCE OF 97-104</scope>
    <scope>PHOSPHORYLATION AT THR-97</scope>
</reference>
<reference key="11">
    <citation type="journal article" date="1998" name="Biochemistry">
        <title>Determination of the sites of posttranslational modifications in the charge isomers of bovine myelin basic protein by capillary electrophoresis-mass spectroscopy.</title>
        <authorList>
            <person name="Zand R."/>
            <person name="Li M.X."/>
            <person name="Jin X."/>
            <person name="Lubman D."/>
        </authorList>
    </citation>
    <scope>DEAMIDATION AT GLN-146</scope>
    <scope>PHOSPHORYLATION AT SER-7; SER-54; THR-97; SER-160 AND SER-164</scope>
</reference>
<reference key="12">
    <citation type="journal article" date="1980" name="Biochemistry">
        <title>Sedimentation analysis of the self-association of bovine myelin basic protein.</title>
        <authorList>
            <person name="Smith R."/>
        </authorList>
    </citation>
    <scope>DIMERIZATION</scope>
</reference>
<reference key="13">
    <citation type="journal article" date="2012" name="J. Proteome Res.">
        <title>Myelin basic protein undergoes a broader range of modifications in mammals than in lower vertebrates.</title>
        <authorList>
            <person name="Zhang C."/>
            <person name="Walker A.K."/>
            <person name="Zand R."/>
            <person name="Moscarello M.A."/>
            <person name="Yan J.M."/>
            <person name="Andrews P.C."/>
        </authorList>
    </citation>
    <scope>ACETYLATION AT ALA-1 AND LYS-121</scope>
    <scope>METHYLATION AT ARG-106</scope>
    <scope>DEAMIDATION AT GLN-102 AND GLN-120</scope>
    <scope>CITRULLINATION AT ARG-23; ARG-47; ARG-96 AND ARG-161</scope>
    <scope>PHOSPHORYLATION AT THR-97</scope>
</reference>
<reference key="14">
    <citation type="journal article" date="2013" name="Proteomics">
        <title>Identification and Characterization of citrulline-modified brain proteins by combining HCD and CID fragmentation.</title>
        <authorList>
            <person name="Jin Z."/>
            <person name="Fu Z."/>
            <person name="Yang J."/>
            <person name="Troncosco J."/>
            <person name="Everett A.D."/>
            <person name="Van Eyk J.E."/>
        </authorList>
    </citation>
    <scope>CITRULLINATION AT ARG-41; ARG-63; ARG-96; ARG-106; ARG-112; ARG-129; ARG-158; ARG-161; ARG-168 AND ARG-169</scope>
    <scope>METHYLATION AT ARG-106</scope>
</reference>